<keyword id="KW-0443">Lipid metabolism</keyword>
<keyword id="KW-1185">Reference proteome</keyword>
<proteinExistence type="inferred from homology"/>
<comment type="function">
    <text evidence="1">Positive regulator of phosphatidylinositol 4,5-bisphosphate turnover and negatively regulates signaling through the cell integrity pathway. Involved in rDNA silencing (By similarity).</text>
</comment>
<comment type="similarity">
    <text evidence="5">Belongs to the IRS4 family.</text>
</comment>
<feature type="chain" id="PRO_0000308759" description="Increased rDNA silencing protein 4">
    <location>
        <begin position="1"/>
        <end position="882"/>
    </location>
</feature>
<feature type="domain" description="EH" evidence="2">
    <location>
        <begin position="783"/>
        <end position="872"/>
    </location>
</feature>
<feature type="domain" description="EF-hand" evidence="3">
    <location>
        <begin position="816"/>
        <end position="851"/>
    </location>
</feature>
<feature type="region of interest" description="Disordered" evidence="4">
    <location>
        <begin position="15"/>
        <end position="36"/>
    </location>
</feature>
<feature type="region of interest" description="Disordered" evidence="4">
    <location>
        <begin position="69"/>
        <end position="148"/>
    </location>
</feature>
<feature type="region of interest" description="Disordered" evidence="4">
    <location>
        <begin position="217"/>
        <end position="238"/>
    </location>
</feature>
<feature type="region of interest" description="Disordered" evidence="4">
    <location>
        <begin position="378"/>
        <end position="409"/>
    </location>
</feature>
<feature type="region of interest" description="Disordered" evidence="4">
    <location>
        <begin position="424"/>
        <end position="448"/>
    </location>
</feature>
<feature type="region of interest" description="Disordered" evidence="4">
    <location>
        <begin position="567"/>
        <end position="674"/>
    </location>
</feature>
<feature type="region of interest" description="Disordered" evidence="4">
    <location>
        <begin position="748"/>
        <end position="769"/>
    </location>
</feature>
<feature type="compositionally biased region" description="Polar residues" evidence="4">
    <location>
        <begin position="26"/>
        <end position="36"/>
    </location>
</feature>
<feature type="compositionally biased region" description="Low complexity" evidence="4">
    <location>
        <begin position="69"/>
        <end position="85"/>
    </location>
</feature>
<feature type="compositionally biased region" description="Polar residues" evidence="4">
    <location>
        <begin position="99"/>
        <end position="114"/>
    </location>
</feature>
<feature type="compositionally biased region" description="Low complexity" evidence="4">
    <location>
        <begin position="130"/>
        <end position="142"/>
    </location>
</feature>
<feature type="compositionally biased region" description="Polar residues" evidence="4">
    <location>
        <begin position="384"/>
        <end position="393"/>
    </location>
</feature>
<feature type="compositionally biased region" description="Acidic residues" evidence="4">
    <location>
        <begin position="575"/>
        <end position="610"/>
    </location>
</feature>
<feature type="compositionally biased region" description="Polar residues" evidence="4">
    <location>
        <begin position="616"/>
        <end position="627"/>
    </location>
</feature>
<feature type="compositionally biased region" description="Low complexity" evidence="4">
    <location>
        <begin position="634"/>
        <end position="657"/>
    </location>
</feature>
<protein>
    <recommendedName>
        <fullName>Increased rDNA silencing protein 4</fullName>
    </recommendedName>
</protein>
<accession>A5DZL0</accession>
<organism>
    <name type="scientific">Lodderomyces elongisporus (strain ATCC 11503 / CBS 2605 / JCM 1781 / NBRC 1676 / NRRL YB-4239)</name>
    <name type="common">Yeast</name>
    <name type="synonym">Saccharomyces elongisporus</name>
    <dbReference type="NCBI Taxonomy" id="379508"/>
    <lineage>
        <taxon>Eukaryota</taxon>
        <taxon>Fungi</taxon>
        <taxon>Dikarya</taxon>
        <taxon>Ascomycota</taxon>
        <taxon>Saccharomycotina</taxon>
        <taxon>Pichiomycetes</taxon>
        <taxon>Debaryomycetaceae</taxon>
        <taxon>Candida/Lodderomyces clade</taxon>
        <taxon>Lodderomyces</taxon>
    </lineage>
</organism>
<name>IRS4_LODEL</name>
<evidence type="ECO:0000250" key="1"/>
<evidence type="ECO:0000255" key="2">
    <source>
        <dbReference type="PROSITE-ProRule" id="PRU00077"/>
    </source>
</evidence>
<evidence type="ECO:0000255" key="3">
    <source>
        <dbReference type="PROSITE-ProRule" id="PRU00448"/>
    </source>
</evidence>
<evidence type="ECO:0000256" key="4">
    <source>
        <dbReference type="SAM" id="MobiDB-lite"/>
    </source>
</evidence>
<evidence type="ECO:0000305" key="5"/>
<reference key="1">
    <citation type="journal article" date="2009" name="Nature">
        <title>Evolution of pathogenicity and sexual reproduction in eight Candida genomes.</title>
        <authorList>
            <person name="Butler G."/>
            <person name="Rasmussen M.D."/>
            <person name="Lin M.F."/>
            <person name="Santos M.A.S."/>
            <person name="Sakthikumar S."/>
            <person name="Munro C.A."/>
            <person name="Rheinbay E."/>
            <person name="Grabherr M."/>
            <person name="Forche A."/>
            <person name="Reedy J.L."/>
            <person name="Agrafioti I."/>
            <person name="Arnaud M.B."/>
            <person name="Bates S."/>
            <person name="Brown A.J.P."/>
            <person name="Brunke S."/>
            <person name="Costanzo M.C."/>
            <person name="Fitzpatrick D.A."/>
            <person name="de Groot P.W.J."/>
            <person name="Harris D."/>
            <person name="Hoyer L.L."/>
            <person name="Hube B."/>
            <person name="Klis F.M."/>
            <person name="Kodira C."/>
            <person name="Lennard N."/>
            <person name="Logue M.E."/>
            <person name="Martin R."/>
            <person name="Neiman A.M."/>
            <person name="Nikolaou E."/>
            <person name="Quail M.A."/>
            <person name="Quinn J."/>
            <person name="Santos M.C."/>
            <person name="Schmitzberger F.F."/>
            <person name="Sherlock G."/>
            <person name="Shah P."/>
            <person name="Silverstein K.A.T."/>
            <person name="Skrzypek M.S."/>
            <person name="Soll D."/>
            <person name="Staggs R."/>
            <person name="Stansfield I."/>
            <person name="Stumpf M.P.H."/>
            <person name="Sudbery P.E."/>
            <person name="Srikantha T."/>
            <person name="Zeng Q."/>
            <person name="Berman J."/>
            <person name="Berriman M."/>
            <person name="Heitman J."/>
            <person name="Gow N.A.R."/>
            <person name="Lorenz M.C."/>
            <person name="Birren B.W."/>
            <person name="Kellis M."/>
            <person name="Cuomo C.A."/>
        </authorList>
    </citation>
    <scope>NUCLEOTIDE SEQUENCE [LARGE SCALE GENOMIC DNA]</scope>
    <source>
        <strain>ATCC 11503 / BCRC 21390 / CBS 2605 / JCM 1781 / NBRC 1676 / NRRL YB-4239</strain>
    </source>
</reference>
<gene>
    <name type="primary">IRS4</name>
    <name type="ORF">LELG_02797</name>
</gene>
<dbReference type="EMBL" id="CH981526">
    <property type="protein sequence ID" value="EDK44618.1"/>
    <property type="molecule type" value="Genomic_DNA"/>
</dbReference>
<dbReference type="RefSeq" id="XP_001526239.1">
    <property type="nucleotide sequence ID" value="XM_001526189.1"/>
</dbReference>
<dbReference type="SMR" id="A5DZL0"/>
<dbReference type="STRING" id="379508.A5DZL0"/>
<dbReference type="GeneID" id="5233038"/>
<dbReference type="KEGG" id="lel:PVL30_003641"/>
<dbReference type="VEuPathDB" id="FungiDB:LELG_02797"/>
<dbReference type="eggNOG" id="KOG0998">
    <property type="taxonomic scope" value="Eukaryota"/>
</dbReference>
<dbReference type="HOGENOM" id="CLU_020874_0_0_1"/>
<dbReference type="InParanoid" id="A5DZL0"/>
<dbReference type="OrthoDB" id="10045710at2759"/>
<dbReference type="Proteomes" id="UP000001996">
    <property type="component" value="Unassembled WGS sequence"/>
</dbReference>
<dbReference type="GO" id="GO:0005737">
    <property type="term" value="C:cytoplasm"/>
    <property type="evidence" value="ECO:0007669"/>
    <property type="project" value="TreeGrafter"/>
</dbReference>
<dbReference type="GO" id="GO:0005886">
    <property type="term" value="C:plasma membrane"/>
    <property type="evidence" value="ECO:0007669"/>
    <property type="project" value="TreeGrafter"/>
</dbReference>
<dbReference type="GO" id="GO:0005509">
    <property type="term" value="F:calcium ion binding"/>
    <property type="evidence" value="ECO:0007669"/>
    <property type="project" value="InterPro"/>
</dbReference>
<dbReference type="GO" id="GO:0006897">
    <property type="term" value="P:endocytosis"/>
    <property type="evidence" value="ECO:0007669"/>
    <property type="project" value="UniProtKB-ARBA"/>
</dbReference>
<dbReference type="GO" id="GO:0006629">
    <property type="term" value="P:lipid metabolic process"/>
    <property type="evidence" value="ECO:0007669"/>
    <property type="project" value="UniProtKB-KW"/>
</dbReference>
<dbReference type="CDD" id="cd00052">
    <property type="entry name" value="EH"/>
    <property type="match status" value="1"/>
</dbReference>
<dbReference type="Gene3D" id="1.10.238.10">
    <property type="entry name" value="EF-hand"/>
    <property type="match status" value="1"/>
</dbReference>
<dbReference type="InterPro" id="IPR011992">
    <property type="entry name" value="EF-hand-dom_pair"/>
</dbReference>
<dbReference type="InterPro" id="IPR002048">
    <property type="entry name" value="EF_hand_dom"/>
</dbReference>
<dbReference type="InterPro" id="IPR000261">
    <property type="entry name" value="EH_dom"/>
</dbReference>
<dbReference type="PANTHER" id="PTHR11216">
    <property type="entry name" value="EH DOMAIN"/>
    <property type="match status" value="1"/>
</dbReference>
<dbReference type="PANTHER" id="PTHR11216:SF174">
    <property type="entry name" value="GH06923P"/>
    <property type="match status" value="1"/>
</dbReference>
<dbReference type="Pfam" id="PF12763">
    <property type="entry name" value="EH"/>
    <property type="match status" value="1"/>
</dbReference>
<dbReference type="SMART" id="SM00027">
    <property type="entry name" value="EH"/>
    <property type="match status" value="1"/>
</dbReference>
<dbReference type="SUPFAM" id="SSF47473">
    <property type="entry name" value="EF-hand"/>
    <property type="match status" value="1"/>
</dbReference>
<dbReference type="PROSITE" id="PS50222">
    <property type="entry name" value="EF_HAND_2"/>
    <property type="match status" value="1"/>
</dbReference>
<dbReference type="PROSITE" id="PS50031">
    <property type="entry name" value="EH"/>
    <property type="match status" value="1"/>
</dbReference>
<sequence length="882" mass="97780">MASGTAANAAALAAFNAGKKRDDGWKQNNEGNNKSSKYVCAPAVKSQNNKVKPAAPAAPAALAGAVNTNTTNTTNTVTTTSASTTPKPKSNHAVHRDTTPTSMVNQQYSQNNDRIMTKSPRPVLNVNTDSSKQGSYSSAASKNNHDNKGLDYFNLGSATSGRSDTFKLPRYLPHTPKDMINNVKSSIEAKNIANDPSSRRLSANYSPQQMLKNLKTSLNEKSKAPAPPKASENDKGRQILSDMRERLDTSRKIAADQAATRGLAPGFDFEEDGDKEDKGYEDYTWNLTDRKKPVSSNRSAKSFKSFKSVKSTNSNKTVNSIAKNVVTKAGENDQLGTTELNISTPERHGICIDVTYHDSDVEDDCLKNENGNKCANGIGHENGHGTQNENNVENGIRNENQHDNESDIGDQVMVPIKLYNSDKSSISSKSKVRRKPPPSLSQEEYGSSSTELLSTDLKHIMALHAKSSDTFSSGDNFNQSDDQISIAENDAGQPNVGTTAAATLVRRGDTKFPQFPEIKKKHYHSRNIFGLKRHDHRNQNSVIWLDPDSDVEAEGEGLGGEAKYVRGVNRKSAGEDDELEEEEEEEQDGEEEEEEEEEGNEVEENEESEFSDASAIANNFNHGNTKNGVRRLGPQSRPQQAHVQQQQPQQSQQQPVQFRTTMRTTNKRKDRKSKFDEYKPWKNHSDLNYLTDQERKRYEGVWVSNKGNYTNLVVVKLHGVDYSTVKDGKVNLEHIDDSMRAALISTNAYPSSKQEEQESMKSNNGTGIKVNSDGSVYNSAIEVPSQANNQSRPERVELSQLILGAVVKRIWSRSGLPDETLEQIWNLVDFRRDGTLTKNEFIVGMWLVDQCLYGRKLPKKVESIVWESLGGIGVNINTKKMR</sequence>